<evidence type="ECO:0000255" key="1">
    <source>
        <dbReference type="HAMAP-Rule" id="MF_01356"/>
    </source>
</evidence>
<feature type="chain" id="PRO_0000376256" description="NADH-quinone oxidoreductase subunit B">
    <location>
        <begin position="1"/>
        <end position="177"/>
    </location>
</feature>
<feature type="binding site" evidence="1">
    <location>
        <position position="36"/>
    </location>
    <ligand>
        <name>[4Fe-4S] cluster</name>
        <dbReference type="ChEBI" id="CHEBI:49883"/>
    </ligand>
</feature>
<feature type="binding site" evidence="1">
    <location>
        <position position="37"/>
    </location>
    <ligand>
        <name>[4Fe-4S] cluster</name>
        <dbReference type="ChEBI" id="CHEBI:49883"/>
    </ligand>
</feature>
<feature type="binding site" evidence="1">
    <location>
        <position position="101"/>
    </location>
    <ligand>
        <name>[4Fe-4S] cluster</name>
        <dbReference type="ChEBI" id="CHEBI:49883"/>
    </ligand>
</feature>
<feature type="binding site" evidence="1">
    <location>
        <position position="130"/>
    </location>
    <ligand>
        <name>[4Fe-4S] cluster</name>
        <dbReference type="ChEBI" id="CHEBI:49883"/>
    </ligand>
</feature>
<sequence>MASSINGNGFITTTVDELLSWGRRNALWPVTIGLACCAIEMMHAAASRFDIDRLGMIFRASPRQADVLIVAGTVVNKVAPMLKLVWDQMPEPKWCISMGGCASAGGPFPTYSTLQGIDRIIPVDVYIPGCPPTPQGLIYGLLELQRKIREKKVTRYEKAFEEFKKDLSPELLNGVGV</sequence>
<accession>B4U8H3</accession>
<reference key="1">
    <citation type="journal article" date="2009" name="J. Bacteriol.">
        <title>Complete and draft genome sequences of six members of the Aquificales.</title>
        <authorList>
            <person name="Reysenbach A.-L."/>
            <person name="Hamamura N."/>
            <person name="Podar M."/>
            <person name="Griffiths E."/>
            <person name="Ferreira S."/>
            <person name="Hochstein R."/>
            <person name="Heidelberg J."/>
            <person name="Johnson J."/>
            <person name="Mead D."/>
            <person name="Pohorille A."/>
            <person name="Sarmiento M."/>
            <person name="Schweighofer K."/>
            <person name="Seshadri R."/>
            <person name="Voytek M.A."/>
        </authorList>
    </citation>
    <scope>NUCLEOTIDE SEQUENCE [LARGE SCALE GENOMIC DNA]</scope>
    <source>
        <strain>Y04AAS1</strain>
    </source>
</reference>
<comment type="function">
    <text evidence="1">NDH-1 shuttles electrons from NADH, via FMN and iron-sulfur (Fe-S) centers, to quinones in the respiratory chain. The immediate electron acceptor for the enzyme in this species is believed to be ubiquinone. Couples the redox reaction to proton translocation (for every two electrons transferred, four hydrogen ions are translocated across the cytoplasmic membrane), and thus conserves the redox energy in a proton gradient.</text>
</comment>
<comment type="catalytic activity">
    <reaction evidence="1">
        <text>a quinone + NADH + 5 H(+)(in) = a quinol + NAD(+) + 4 H(+)(out)</text>
        <dbReference type="Rhea" id="RHEA:57888"/>
        <dbReference type="ChEBI" id="CHEBI:15378"/>
        <dbReference type="ChEBI" id="CHEBI:24646"/>
        <dbReference type="ChEBI" id="CHEBI:57540"/>
        <dbReference type="ChEBI" id="CHEBI:57945"/>
        <dbReference type="ChEBI" id="CHEBI:132124"/>
    </reaction>
</comment>
<comment type="cofactor">
    <cofactor evidence="1">
        <name>[4Fe-4S] cluster</name>
        <dbReference type="ChEBI" id="CHEBI:49883"/>
    </cofactor>
    <text evidence="1">Binds 1 [4Fe-4S] cluster.</text>
</comment>
<comment type="subunit">
    <text evidence="1">NDH-1 is composed of 14 different subunits. Subunits NuoB, C, D, E, F, and G constitute the peripheral sector of the complex.</text>
</comment>
<comment type="subcellular location">
    <subcellularLocation>
        <location evidence="1">Cell inner membrane</location>
        <topology evidence="1">Peripheral membrane protein</topology>
        <orientation evidence="1">Cytoplasmic side</orientation>
    </subcellularLocation>
</comment>
<comment type="similarity">
    <text evidence="1">Belongs to the complex I 20 kDa subunit family.</text>
</comment>
<protein>
    <recommendedName>
        <fullName evidence="1">NADH-quinone oxidoreductase subunit B</fullName>
        <ecNumber evidence="1">7.1.1.-</ecNumber>
    </recommendedName>
    <alternativeName>
        <fullName evidence="1">NADH dehydrogenase I subunit B</fullName>
    </alternativeName>
    <alternativeName>
        <fullName evidence="1">NDH-1 subunit B</fullName>
    </alternativeName>
</protein>
<name>NUOB_HYDS0</name>
<proteinExistence type="inferred from homology"/>
<keyword id="KW-0004">4Fe-4S</keyword>
<keyword id="KW-0997">Cell inner membrane</keyword>
<keyword id="KW-1003">Cell membrane</keyword>
<keyword id="KW-0408">Iron</keyword>
<keyword id="KW-0411">Iron-sulfur</keyword>
<keyword id="KW-0472">Membrane</keyword>
<keyword id="KW-0479">Metal-binding</keyword>
<keyword id="KW-0520">NAD</keyword>
<keyword id="KW-0874">Quinone</keyword>
<keyword id="KW-1278">Translocase</keyword>
<keyword id="KW-0813">Transport</keyword>
<keyword id="KW-0830">Ubiquinone</keyword>
<gene>
    <name evidence="1" type="primary">nuoB</name>
    <name type="ordered locus">HY04AAS1_0747</name>
</gene>
<dbReference type="EC" id="7.1.1.-" evidence="1"/>
<dbReference type="EMBL" id="CP001130">
    <property type="protein sequence ID" value="ACG57434.1"/>
    <property type="molecule type" value="Genomic_DNA"/>
</dbReference>
<dbReference type="RefSeq" id="WP_012513790.1">
    <property type="nucleotide sequence ID" value="NC_011126.1"/>
</dbReference>
<dbReference type="SMR" id="B4U8H3"/>
<dbReference type="STRING" id="380749.HY04AAS1_0747"/>
<dbReference type="KEGG" id="hya:HY04AAS1_0747"/>
<dbReference type="eggNOG" id="COG0377">
    <property type="taxonomic scope" value="Bacteria"/>
</dbReference>
<dbReference type="HOGENOM" id="CLU_055737_7_3_0"/>
<dbReference type="OrthoDB" id="9786737at2"/>
<dbReference type="GO" id="GO:0005886">
    <property type="term" value="C:plasma membrane"/>
    <property type="evidence" value="ECO:0007669"/>
    <property type="project" value="UniProtKB-SubCell"/>
</dbReference>
<dbReference type="GO" id="GO:0045271">
    <property type="term" value="C:respiratory chain complex I"/>
    <property type="evidence" value="ECO:0007669"/>
    <property type="project" value="TreeGrafter"/>
</dbReference>
<dbReference type="GO" id="GO:0051539">
    <property type="term" value="F:4 iron, 4 sulfur cluster binding"/>
    <property type="evidence" value="ECO:0007669"/>
    <property type="project" value="UniProtKB-KW"/>
</dbReference>
<dbReference type="GO" id="GO:0005506">
    <property type="term" value="F:iron ion binding"/>
    <property type="evidence" value="ECO:0007669"/>
    <property type="project" value="UniProtKB-UniRule"/>
</dbReference>
<dbReference type="GO" id="GO:0008137">
    <property type="term" value="F:NADH dehydrogenase (ubiquinone) activity"/>
    <property type="evidence" value="ECO:0007669"/>
    <property type="project" value="InterPro"/>
</dbReference>
<dbReference type="GO" id="GO:0050136">
    <property type="term" value="F:NADH:ubiquinone reductase (non-electrogenic) activity"/>
    <property type="evidence" value="ECO:0007669"/>
    <property type="project" value="UniProtKB-UniRule"/>
</dbReference>
<dbReference type="GO" id="GO:0048038">
    <property type="term" value="F:quinone binding"/>
    <property type="evidence" value="ECO:0007669"/>
    <property type="project" value="UniProtKB-KW"/>
</dbReference>
<dbReference type="GO" id="GO:0009060">
    <property type="term" value="P:aerobic respiration"/>
    <property type="evidence" value="ECO:0007669"/>
    <property type="project" value="TreeGrafter"/>
</dbReference>
<dbReference type="GO" id="GO:0015990">
    <property type="term" value="P:electron transport coupled proton transport"/>
    <property type="evidence" value="ECO:0007669"/>
    <property type="project" value="TreeGrafter"/>
</dbReference>
<dbReference type="FunFam" id="3.40.50.12280:FF:000002">
    <property type="entry name" value="NADH-quinone oxidoreductase subunit B"/>
    <property type="match status" value="1"/>
</dbReference>
<dbReference type="Gene3D" id="3.40.50.12280">
    <property type="match status" value="1"/>
</dbReference>
<dbReference type="HAMAP" id="MF_01356">
    <property type="entry name" value="NDH1_NuoB"/>
    <property type="match status" value="1"/>
</dbReference>
<dbReference type="InterPro" id="IPR006137">
    <property type="entry name" value="NADH_UbQ_OxRdtase-like_20kDa"/>
</dbReference>
<dbReference type="InterPro" id="IPR006138">
    <property type="entry name" value="NADH_UQ_OxRdtase_20Kd_su"/>
</dbReference>
<dbReference type="NCBIfam" id="TIGR01957">
    <property type="entry name" value="nuoB_fam"/>
    <property type="match status" value="1"/>
</dbReference>
<dbReference type="NCBIfam" id="NF005012">
    <property type="entry name" value="PRK06411.1"/>
    <property type="match status" value="1"/>
</dbReference>
<dbReference type="PANTHER" id="PTHR11995">
    <property type="entry name" value="NADH DEHYDROGENASE"/>
    <property type="match status" value="1"/>
</dbReference>
<dbReference type="PANTHER" id="PTHR11995:SF14">
    <property type="entry name" value="NADH DEHYDROGENASE [UBIQUINONE] IRON-SULFUR PROTEIN 7, MITOCHONDRIAL"/>
    <property type="match status" value="1"/>
</dbReference>
<dbReference type="Pfam" id="PF01058">
    <property type="entry name" value="Oxidored_q6"/>
    <property type="match status" value="1"/>
</dbReference>
<dbReference type="SUPFAM" id="SSF56770">
    <property type="entry name" value="HydA/Nqo6-like"/>
    <property type="match status" value="1"/>
</dbReference>
<dbReference type="PROSITE" id="PS01150">
    <property type="entry name" value="COMPLEX1_20K"/>
    <property type="match status" value="1"/>
</dbReference>
<organism>
    <name type="scientific">Hydrogenobaculum sp. (strain Y04AAS1)</name>
    <dbReference type="NCBI Taxonomy" id="380749"/>
    <lineage>
        <taxon>Bacteria</taxon>
        <taxon>Pseudomonadati</taxon>
        <taxon>Aquificota</taxon>
        <taxon>Aquificia</taxon>
        <taxon>Aquificales</taxon>
        <taxon>Aquificaceae</taxon>
        <taxon>Hydrogenobaculum</taxon>
    </lineage>
</organism>